<protein>
    <recommendedName>
        <fullName evidence="1">Aspartate 1-decarboxylase</fullName>
        <ecNumber evidence="1">4.1.1.11</ecNumber>
    </recommendedName>
    <alternativeName>
        <fullName evidence="1">Aspartate alpha-decarboxylase</fullName>
    </alternativeName>
    <component>
        <recommendedName>
            <fullName evidence="1">Aspartate 1-decarboxylase beta chain</fullName>
        </recommendedName>
    </component>
    <component>
        <recommendedName>
            <fullName evidence="1">Aspartate 1-decarboxylase alpha chain</fullName>
        </recommendedName>
    </component>
</protein>
<evidence type="ECO:0000255" key="1">
    <source>
        <dbReference type="HAMAP-Rule" id="MF_00446"/>
    </source>
</evidence>
<organism>
    <name type="scientific">Legionella pneumophila (strain Paris)</name>
    <dbReference type="NCBI Taxonomy" id="297246"/>
    <lineage>
        <taxon>Bacteria</taxon>
        <taxon>Pseudomonadati</taxon>
        <taxon>Pseudomonadota</taxon>
        <taxon>Gammaproteobacteria</taxon>
        <taxon>Legionellales</taxon>
        <taxon>Legionellaceae</taxon>
        <taxon>Legionella</taxon>
    </lineage>
</organism>
<gene>
    <name evidence="1" type="primary">panD</name>
    <name type="ordered locus">lpp2996</name>
</gene>
<dbReference type="EC" id="4.1.1.11" evidence="1"/>
<dbReference type="EMBL" id="CR628336">
    <property type="protein sequence ID" value="CAH14149.1"/>
    <property type="molecule type" value="Genomic_DNA"/>
</dbReference>
<dbReference type="RefSeq" id="WP_011947823.1">
    <property type="nucleotide sequence ID" value="NC_006368.1"/>
</dbReference>
<dbReference type="SMR" id="Q5X0V0"/>
<dbReference type="KEGG" id="lpp:lpp2996"/>
<dbReference type="LegioList" id="lpp2996"/>
<dbReference type="HOGENOM" id="CLU_115305_2_0_6"/>
<dbReference type="UniPathway" id="UPA00028">
    <property type="reaction ID" value="UER00002"/>
</dbReference>
<dbReference type="GO" id="GO:0005829">
    <property type="term" value="C:cytosol"/>
    <property type="evidence" value="ECO:0007669"/>
    <property type="project" value="TreeGrafter"/>
</dbReference>
<dbReference type="GO" id="GO:0004068">
    <property type="term" value="F:aspartate 1-decarboxylase activity"/>
    <property type="evidence" value="ECO:0007669"/>
    <property type="project" value="UniProtKB-UniRule"/>
</dbReference>
<dbReference type="GO" id="GO:0006523">
    <property type="term" value="P:alanine biosynthetic process"/>
    <property type="evidence" value="ECO:0007669"/>
    <property type="project" value="InterPro"/>
</dbReference>
<dbReference type="GO" id="GO:0015940">
    <property type="term" value="P:pantothenate biosynthetic process"/>
    <property type="evidence" value="ECO:0007669"/>
    <property type="project" value="UniProtKB-UniRule"/>
</dbReference>
<dbReference type="CDD" id="cd06919">
    <property type="entry name" value="Asp_decarbox"/>
    <property type="match status" value="1"/>
</dbReference>
<dbReference type="Gene3D" id="2.40.40.20">
    <property type="match status" value="1"/>
</dbReference>
<dbReference type="HAMAP" id="MF_00446">
    <property type="entry name" value="PanD"/>
    <property type="match status" value="1"/>
</dbReference>
<dbReference type="InterPro" id="IPR009010">
    <property type="entry name" value="Asp_de-COase-like_dom_sf"/>
</dbReference>
<dbReference type="InterPro" id="IPR003190">
    <property type="entry name" value="Asp_decarbox"/>
</dbReference>
<dbReference type="NCBIfam" id="TIGR00223">
    <property type="entry name" value="panD"/>
    <property type="match status" value="1"/>
</dbReference>
<dbReference type="PANTHER" id="PTHR21012">
    <property type="entry name" value="ASPARTATE 1-DECARBOXYLASE"/>
    <property type="match status" value="1"/>
</dbReference>
<dbReference type="PANTHER" id="PTHR21012:SF0">
    <property type="entry name" value="ASPARTATE 1-DECARBOXYLASE"/>
    <property type="match status" value="1"/>
</dbReference>
<dbReference type="Pfam" id="PF02261">
    <property type="entry name" value="Asp_decarbox"/>
    <property type="match status" value="1"/>
</dbReference>
<dbReference type="PIRSF" id="PIRSF006246">
    <property type="entry name" value="Asp_decarbox"/>
    <property type="match status" value="1"/>
</dbReference>
<dbReference type="SUPFAM" id="SSF50692">
    <property type="entry name" value="ADC-like"/>
    <property type="match status" value="1"/>
</dbReference>
<reference key="1">
    <citation type="journal article" date="2004" name="Nat. Genet.">
        <title>Evidence in the Legionella pneumophila genome for exploitation of host cell functions and high genome plasticity.</title>
        <authorList>
            <person name="Cazalet C."/>
            <person name="Rusniok C."/>
            <person name="Brueggemann H."/>
            <person name="Zidane N."/>
            <person name="Magnier A."/>
            <person name="Ma L."/>
            <person name="Tichit M."/>
            <person name="Jarraud S."/>
            <person name="Bouchier C."/>
            <person name="Vandenesch F."/>
            <person name="Kunst F."/>
            <person name="Etienne J."/>
            <person name="Glaser P."/>
            <person name="Buchrieser C."/>
        </authorList>
    </citation>
    <scope>NUCLEOTIDE SEQUENCE [LARGE SCALE GENOMIC DNA]</scope>
    <source>
        <strain>Paris</strain>
    </source>
</reference>
<comment type="function">
    <text evidence="1">Catalyzes the pyruvoyl-dependent decarboxylation of aspartate to produce beta-alanine.</text>
</comment>
<comment type="catalytic activity">
    <reaction evidence="1">
        <text>L-aspartate + H(+) = beta-alanine + CO2</text>
        <dbReference type="Rhea" id="RHEA:19497"/>
        <dbReference type="ChEBI" id="CHEBI:15378"/>
        <dbReference type="ChEBI" id="CHEBI:16526"/>
        <dbReference type="ChEBI" id="CHEBI:29991"/>
        <dbReference type="ChEBI" id="CHEBI:57966"/>
        <dbReference type="EC" id="4.1.1.11"/>
    </reaction>
</comment>
<comment type="cofactor">
    <cofactor evidence="1">
        <name>pyruvate</name>
        <dbReference type="ChEBI" id="CHEBI:15361"/>
    </cofactor>
    <text evidence="1">Binds 1 pyruvoyl group covalently per subunit.</text>
</comment>
<comment type="pathway">
    <text evidence="1">Cofactor biosynthesis; (R)-pantothenate biosynthesis; beta-alanine from L-aspartate: step 1/1.</text>
</comment>
<comment type="subunit">
    <text evidence="1">Heterooctamer of four alpha and four beta subunits.</text>
</comment>
<comment type="subcellular location">
    <subcellularLocation>
        <location evidence="1">Cytoplasm</location>
    </subcellularLocation>
</comment>
<comment type="PTM">
    <text evidence="1">Is synthesized initially as an inactive proenzyme, which is activated by self-cleavage at a specific serine bond to produce a beta-subunit with a hydroxyl group at its C-terminus and an alpha-subunit with a pyruvoyl group at its N-terminus.</text>
</comment>
<comment type="similarity">
    <text evidence="1">Belongs to the PanD family.</text>
</comment>
<proteinExistence type="inferred from homology"/>
<name>PAND_LEGPA</name>
<sequence>MAYRKMLKSKIHRACVTQADLDYEGSITISPELLKVANILPYEAVNVWNITAGTRFETYAITGEKGSTDICVNGAAAHLVTPGDLVIIASFTQILEEDCAAHEPTVVFVDQFNRLKEIRPERIGVKSRIPYPA</sequence>
<keyword id="KW-0068">Autocatalytic cleavage</keyword>
<keyword id="KW-0963">Cytoplasm</keyword>
<keyword id="KW-0210">Decarboxylase</keyword>
<keyword id="KW-0456">Lyase</keyword>
<keyword id="KW-0566">Pantothenate biosynthesis</keyword>
<keyword id="KW-0670">Pyruvate</keyword>
<keyword id="KW-0704">Schiff base</keyword>
<keyword id="KW-0865">Zymogen</keyword>
<feature type="chain" id="PRO_0000023095" description="Aspartate 1-decarboxylase beta chain" evidence="1">
    <location>
        <begin position="1"/>
        <end position="25"/>
    </location>
</feature>
<feature type="chain" id="PRO_0000023096" description="Aspartate 1-decarboxylase alpha chain" evidence="1">
    <location>
        <begin position="26"/>
        <end position="133"/>
    </location>
</feature>
<feature type="active site" description="Schiff-base intermediate with substrate; via pyruvic acid" evidence="1">
    <location>
        <position position="26"/>
    </location>
</feature>
<feature type="active site" description="Proton donor" evidence="1">
    <location>
        <position position="59"/>
    </location>
</feature>
<feature type="binding site" evidence="1">
    <location>
        <position position="58"/>
    </location>
    <ligand>
        <name>substrate</name>
    </ligand>
</feature>
<feature type="binding site" evidence="1">
    <location>
        <begin position="74"/>
        <end position="76"/>
    </location>
    <ligand>
        <name>substrate</name>
    </ligand>
</feature>
<feature type="modified residue" description="Pyruvic acid (Ser)" evidence="1">
    <location>
        <position position="26"/>
    </location>
</feature>
<accession>Q5X0V0</accession>